<evidence type="ECO:0000250" key="1"/>
<evidence type="ECO:0000305" key="2"/>
<keyword id="KW-0027">Amidation</keyword>
<keyword id="KW-1015">Disulfide bond</keyword>
<keyword id="KW-0872">Ion channel impairing toxin</keyword>
<keyword id="KW-0960">Knottin</keyword>
<keyword id="KW-0528">Neurotoxin</keyword>
<keyword id="KW-0964">Secreted</keyword>
<keyword id="KW-0800">Toxin</keyword>
<protein>
    <recommendedName>
        <fullName>Conotoxin Bu10</fullName>
    </recommendedName>
</protein>
<dbReference type="SMR" id="P0CY68"/>
<dbReference type="GO" id="GO:0005576">
    <property type="term" value="C:extracellular region"/>
    <property type="evidence" value="ECO:0007669"/>
    <property type="project" value="UniProtKB-SubCell"/>
</dbReference>
<dbReference type="GO" id="GO:0099106">
    <property type="term" value="F:ion channel regulator activity"/>
    <property type="evidence" value="ECO:0007669"/>
    <property type="project" value="UniProtKB-KW"/>
</dbReference>
<dbReference type="GO" id="GO:0090729">
    <property type="term" value="F:toxin activity"/>
    <property type="evidence" value="ECO:0007669"/>
    <property type="project" value="UniProtKB-KW"/>
</dbReference>
<comment type="subcellular location">
    <subcellularLocation>
        <location evidence="1">Secreted</location>
    </subcellularLocation>
</comment>
<comment type="tissue specificity">
    <text>Expressed by the venom duct.</text>
</comment>
<comment type="domain">
    <text>The presence of a 'disulfide through disulfide knot' structurally defines this protein as a knottin.</text>
</comment>
<comment type="domain">
    <text>The cysteine framework is VI/VII (C-C-CC-C-C).</text>
</comment>
<comment type="similarity">
    <text evidence="2">Belongs to the conotoxin O1 superfamily.</text>
</comment>
<sequence>DSRGTQLHRALRKATILSVSARCKLSGYRCKRPKQCCNLSCGNYMCG</sequence>
<accession>P0CY68</accession>
<organism>
    <name type="scientific">Conus bullatus</name>
    <name type="common">Bubble cone</name>
    <dbReference type="NCBI Taxonomy" id="89438"/>
    <lineage>
        <taxon>Eukaryota</taxon>
        <taxon>Metazoa</taxon>
        <taxon>Spiralia</taxon>
        <taxon>Lophotrochozoa</taxon>
        <taxon>Mollusca</taxon>
        <taxon>Gastropoda</taxon>
        <taxon>Caenogastropoda</taxon>
        <taxon>Neogastropoda</taxon>
        <taxon>Conoidea</taxon>
        <taxon>Conidae</taxon>
        <taxon>Conus</taxon>
        <taxon>Textilia</taxon>
    </lineage>
</organism>
<reference key="1">
    <citation type="journal article" date="2011" name="BMC Genomics">
        <title>Characterization of the Conus bullatus genome and its venom-duct transcriptome.</title>
        <authorList>
            <person name="Hu H."/>
            <person name="Bandyopadhyay P.K."/>
            <person name="Olivera B.M."/>
            <person name="Yandell M."/>
        </authorList>
    </citation>
    <scope>NUCLEOTIDE SEQUENCE [MRNA]</scope>
    <source>
        <tissue>Venom duct</tissue>
    </source>
</reference>
<name>O17A_CONBU</name>
<proteinExistence type="evidence at transcript level"/>
<feature type="propeptide" id="PRO_0000409952">
    <location>
        <begin position="1" status="less than"/>
        <end position="22"/>
    </location>
</feature>
<feature type="peptide" id="PRO_0000409953" description="Conotoxin Bu10">
    <location>
        <begin position="23"/>
        <end position="46"/>
    </location>
</feature>
<feature type="modified residue" description="Cysteine amide" evidence="1">
    <location>
        <position position="46"/>
    </location>
</feature>
<feature type="disulfide bond" evidence="1">
    <location>
        <begin position="23"/>
        <end position="37"/>
    </location>
</feature>
<feature type="disulfide bond" evidence="1">
    <location>
        <begin position="30"/>
        <end position="41"/>
    </location>
</feature>
<feature type="disulfide bond" evidence="1">
    <location>
        <begin position="36"/>
        <end position="46"/>
    </location>
</feature>
<feature type="non-terminal residue">
    <location>
        <position position="1"/>
    </location>
</feature>